<name>REG3A_HUMAN</name>
<sequence>MLPPMALPSVSWMLLSCLMLLSQVQGEEPQRELPSARIRCPKGSKAYGSHCYALFLSPKSWTDADLACQKRPSGNLVSVLSGAEGSFVSSLVKSIGNSYSYVWIGLHDPTQGTEPNGEGWEWSSSDVMNYFAWERNPSTISSPGHCASLSRSTAFLRWKDYNCNVRLPYVCKFTD</sequence>
<evidence type="ECO:0000250" key="1"/>
<evidence type="ECO:0000255" key="2">
    <source>
        <dbReference type="PROSITE-ProRule" id="PRU00040"/>
    </source>
</evidence>
<evidence type="ECO:0000269" key="3">
    <source>
    </source>
</evidence>
<evidence type="ECO:0000269" key="4">
    <source>
    </source>
</evidence>
<evidence type="ECO:0000269" key="5">
    <source>
    </source>
</evidence>
<evidence type="ECO:0000269" key="6">
    <source>
    </source>
</evidence>
<evidence type="ECO:0000269" key="7">
    <source>
    </source>
</evidence>
<evidence type="ECO:0000269" key="8">
    <source>
    </source>
</evidence>
<evidence type="ECO:0000269" key="9">
    <source>
    </source>
</evidence>
<evidence type="ECO:0000269" key="10">
    <source>
    </source>
</evidence>
<evidence type="ECO:0000269" key="11">
    <source>
    </source>
</evidence>
<evidence type="ECO:0000303" key="12">
    <source>
    </source>
</evidence>
<evidence type="ECO:0000305" key="13"/>
<evidence type="ECO:0000305" key="14">
    <source>
    </source>
</evidence>
<evidence type="ECO:0000312" key="15">
    <source>
        <dbReference type="HGNC" id="HGNC:8601"/>
    </source>
</evidence>
<evidence type="ECO:0007744" key="16">
    <source>
        <dbReference type="PDB" id="2GO0"/>
    </source>
</evidence>
<evidence type="ECO:0007744" key="17">
    <source>
        <dbReference type="PDB" id="4MTH"/>
    </source>
</evidence>
<evidence type="ECO:0007829" key="18">
    <source>
        <dbReference type="PDB" id="2GO0"/>
    </source>
</evidence>
<evidence type="ECO:0007829" key="19">
    <source>
        <dbReference type="PDB" id="4MTH"/>
    </source>
</evidence>
<organism>
    <name type="scientific">Homo sapiens</name>
    <name type="common">Human</name>
    <dbReference type="NCBI Taxonomy" id="9606"/>
    <lineage>
        <taxon>Eukaryota</taxon>
        <taxon>Metazoa</taxon>
        <taxon>Chordata</taxon>
        <taxon>Craniata</taxon>
        <taxon>Vertebrata</taxon>
        <taxon>Euteleostomi</taxon>
        <taxon>Mammalia</taxon>
        <taxon>Eutheria</taxon>
        <taxon>Euarchontoglires</taxon>
        <taxon>Primates</taxon>
        <taxon>Haplorrhini</taxon>
        <taxon>Catarrhini</taxon>
        <taxon>Hominidae</taxon>
        <taxon>Homo</taxon>
    </lineage>
</organism>
<accession>Q06141</accession>
<proteinExistence type="evidence at protein level"/>
<dbReference type="EMBL" id="D13510">
    <property type="protein sequence ID" value="BAA02728.1"/>
    <property type="molecule type" value="mRNA"/>
</dbReference>
<dbReference type="EMBL" id="M84337">
    <property type="protein sequence ID" value="AAA36415.1"/>
    <property type="molecule type" value="mRNA"/>
</dbReference>
<dbReference type="EMBL" id="S51768">
    <property type="protein sequence ID" value="AAB24642.1"/>
    <property type="molecule type" value="mRNA"/>
</dbReference>
<dbReference type="EMBL" id="X68641">
    <property type="protein sequence ID" value="CAA48605.1"/>
    <property type="molecule type" value="mRNA"/>
</dbReference>
<dbReference type="EMBL" id="L15533">
    <property type="protein sequence ID" value="AAA60020.1"/>
    <property type="molecule type" value="Genomic_DNA"/>
</dbReference>
<dbReference type="EMBL" id="BC036776">
    <property type="protein sequence ID" value="AAH36776.1"/>
    <property type="molecule type" value="mRNA"/>
</dbReference>
<dbReference type="CCDS" id="CCDS1965.1"/>
<dbReference type="PIR" id="A49616">
    <property type="entry name" value="A49616"/>
</dbReference>
<dbReference type="RefSeq" id="NP_002571.1">
    <property type="nucleotide sequence ID" value="NM_002580.3"/>
</dbReference>
<dbReference type="RefSeq" id="NP_620354.1">
    <property type="nucleotide sequence ID" value="NM_138937.3"/>
</dbReference>
<dbReference type="RefSeq" id="NP_620355.1">
    <property type="nucleotide sequence ID" value="NM_138938.3"/>
</dbReference>
<dbReference type="PDB" id="1UV0">
    <property type="method" value="X-ray"/>
    <property type="resolution" value="1.78 A"/>
    <property type="chains" value="A=27-175"/>
</dbReference>
<dbReference type="PDB" id="2GO0">
    <property type="method" value="NMR"/>
    <property type="chains" value="A=39-175"/>
</dbReference>
<dbReference type="PDB" id="4MTH">
    <property type="method" value="X-ray"/>
    <property type="resolution" value="1.47 A"/>
    <property type="chains" value="A=38-175"/>
</dbReference>
<dbReference type="PDBsum" id="1UV0"/>
<dbReference type="PDBsum" id="2GO0"/>
<dbReference type="PDBsum" id="4MTH"/>
<dbReference type="EMDB" id="EMD-5795"/>
<dbReference type="SMR" id="Q06141"/>
<dbReference type="BioGRID" id="111103">
    <property type="interactions" value="15"/>
</dbReference>
<dbReference type="DIP" id="DIP-60688N"/>
<dbReference type="FunCoup" id="Q06141">
    <property type="interactions" value="36"/>
</dbReference>
<dbReference type="IntAct" id="Q06141">
    <property type="interactions" value="10"/>
</dbReference>
<dbReference type="STRING" id="9606.ENSP00000377456"/>
<dbReference type="MEROPS" id="I63.002"/>
<dbReference type="TCDB" id="1.C.111.1.2">
    <property type="family name" value="the regiiiGama (regiiiGama) family"/>
</dbReference>
<dbReference type="UniLectin" id="Q06141"/>
<dbReference type="BioMuta" id="REG3A"/>
<dbReference type="DMDM" id="464341"/>
<dbReference type="jPOST" id="Q06141"/>
<dbReference type="MassIVE" id="Q06141"/>
<dbReference type="PaxDb" id="9606-ENSP00000377456"/>
<dbReference type="PeptideAtlas" id="Q06141"/>
<dbReference type="ProteomicsDB" id="58418"/>
<dbReference type="Antibodypedia" id="16859">
    <property type="antibodies" value="514 antibodies from 34 providers"/>
</dbReference>
<dbReference type="DNASU" id="5068"/>
<dbReference type="Ensembl" id="ENST00000305165.3">
    <property type="protein sequence ID" value="ENSP00000304311.2"/>
    <property type="gene ID" value="ENSG00000172016.16"/>
</dbReference>
<dbReference type="Ensembl" id="ENST00000393878.5">
    <property type="protein sequence ID" value="ENSP00000377456.1"/>
    <property type="gene ID" value="ENSG00000172016.16"/>
</dbReference>
<dbReference type="Ensembl" id="ENST00000409839.7">
    <property type="protein sequence ID" value="ENSP00000386630.3"/>
    <property type="gene ID" value="ENSG00000172016.16"/>
</dbReference>
<dbReference type="GeneID" id="5068"/>
<dbReference type="KEGG" id="hsa:5068"/>
<dbReference type="MANE-Select" id="ENST00000305165.3">
    <property type="protein sequence ID" value="ENSP00000304311.2"/>
    <property type="RefSeq nucleotide sequence ID" value="NM_002580.3"/>
    <property type="RefSeq protein sequence ID" value="NP_002571.1"/>
</dbReference>
<dbReference type="AGR" id="HGNC:8601"/>
<dbReference type="CTD" id="5068"/>
<dbReference type="DisGeNET" id="5068"/>
<dbReference type="GeneCards" id="REG3A"/>
<dbReference type="HGNC" id="HGNC:8601">
    <property type="gene designation" value="REG3A"/>
</dbReference>
<dbReference type="HPA" id="ENSG00000172016">
    <property type="expression patterns" value="Group enriched (intestine, pancreas)"/>
</dbReference>
<dbReference type="MIM" id="167805">
    <property type="type" value="gene"/>
</dbReference>
<dbReference type="neXtProt" id="NX_Q06141"/>
<dbReference type="OpenTargets" id="ENSG00000172016"/>
<dbReference type="PharmGKB" id="PA32931"/>
<dbReference type="VEuPathDB" id="HostDB:ENSG00000172016"/>
<dbReference type="eggNOG" id="KOG4297">
    <property type="taxonomic scope" value="Eukaryota"/>
</dbReference>
<dbReference type="GeneTree" id="ENSGT00940000162300"/>
<dbReference type="HOGENOM" id="CLU_049894_18_0_1"/>
<dbReference type="InParanoid" id="Q06141"/>
<dbReference type="OMA" id="FFNWDRN"/>
<dbReference type="OrthoDB" id="418245at2759"/>
<dbReference type="PAN-GO" id="Q06141">
    <property type="GO annotations" value="8 GO annotations based on evolutionary models"/>
</dbReference>
<dbReference type="PhylomeDB" id="Q06141"/>
<dbReference type="PathwayCommons" id="Q06141"/>
<dbReference type="Reactome" id="R-HSA-6803157">
    <property type="pathway name" value="Antimicrobial peptides"/>
</dbReference>
<dbReference type="SignaLink" id="Q06141"/>
<dbReference type="BioGRID-ORCS" id="5068">
    <property type="hits" value="6 hits in 1133 CRISPR screens"/>
</dbReference>
<dbReference type="ChiTaRS" id="REG3A">
    <property type="organism name" value="human"/>
</dbReference>
<dbReference type="EvolutionaryTrace" id="Q06141"/>
<dbReference type="GeneWiki" id="REG3A"/>
<dbReference type="GenomeRNAi" id="5068"/>
<dbReference type="Pharos" id="Q06141">
    <property type="development level" value="Tbio"/>
</dbReference>
<dbReference type="PRO" id="PR:Q06141"/>
<dbReference type="Proteomes" id="UP000005640">
    <property type="component" value="Chromosome 2"/>
</dbReference>
<dbReference type="RNAct" id="Q06141">
    <property type="molecule type" value="protein"/>
</dbReference>
<dbReference type="Bgee" id="ENSG00000172016">
    <property type="expression patterns" value="Expressed in ileal mucosa and 114 other cell types or tissues"/>
</dbReference>
<dbReference type="ExpressionAtlas" id="Q06141">
    <property type="expression patterns" value="baseline and differential"/>
</dbReference>
<dbReference type="GO" id="GO:0005737">
    <property type="term" value="C:cytoplasm"/>
    <property type="evidence" value="ECO:0000304"/>
    <property type="project" value="ProtInc"/>
</dbReference>
<dbReference type="GO" id="GO:0005576">
    <property type="term" value="C:extracellular region"/>
    <property type="evidence" value="ECO:0000304"/>
    <property type="project" value="Reactome"/>
</dbReference>
<dbReference type="GO" id="GO:0005615">
    <property type="term" value="C:extracellular space"/>
    <property type="evidence" value="ECO:0000314"/>
    <property type="project" value="UniProt"/>
</dbReference>
<dbReference type="GO" id="GO:0030246">
    <property type="term" value="F:carbohydrate binding"/>
    <property type="evidence" value="ECO:0000304"/>
    <property type="project" value="ProtInc"/>
</dbReference>
<dbReference type="GO" id="GO:0005179">
    <property type="term" value="F:hormone activity"/>
    <property type="evidence" value="ECO:0000314"/>
    <property type="project" value="UniProt"/>
</dbReference>
<dbReference type="GO" id="GO:0042802">
    <property type="term" value="F:identical protein binding"/>
    <property type="evidence" value="ECO:0000353"/>
    <property type="project" value="IntAct"/>
</dbReference>
<dbReference type="GO" id="GO:0070492">
    <property type="term" value="F:oligosaccharide binding"/>
    <property type="evidence" value="ECO:0000318"/>
    <property type="project" value="GO_Central"/>
</dbReference>
<dbReference type="GO" id="GO:0042834">
    <property type="term" value="F:peptidoglycan binding"/>
    <property type="evidence" value="ECO:0000318"/>
    <property type="project" value="GO_Central"/>
</dbReference>
<dbReference type="GO" id="GO:0038023">
    <property type="term" value="F:signaling receptor activity"/>
    <property type="evidence" value="ECO:0000318"/>
    <property type="project" value="GO_Central"/>
</dbReference>
<dbReference type="GO" id="GO:0006953">
    <property type="term" value="P:acute-phase response"/>
    <property type="evidence" value="ECO:0007669"/>
    <property type="project" value="UniProtKB-KW"/>
</dbReference>
<dbReference type="GO" id="GO:0061844">
    <property type="term" value="P:antimicrobial humoral immune response mediated by antimicrobial peptide"/>
    <property type="evidence" value="ECO:0000318"/>
    <property type="project" value="GO_Central"/>
</dbReference>
<dbReference type="GO" id="GO:0007157">
    <property type="term" value="P:heterophilic cell-cell adhesion via plasma membrane cell adhesion molecules"/>
    <property type="evidence" value="ECO:0000304"/>
    <property type="project" value="ProtInc"/>
</dbReference>
<dbReference type="GO" id="GO:0106015">
    <property type="term" value="P:negative regulation of inflammatory response to wounding"/>
    <property type="evidence" value="ECO:0000314"/>
    <property type="project" value="UniProt"/>
</dbReference>
<dbReference type="GO" id="GO:0045617">
    <property type="term" value="P:negative regulation of keratinocyte differentiation"/>
    <property type="evidence" value="ECO:0000314"/>
    <property type="project" value="UniProt"/>
</dbReference>
<dbReference type="GO" id="GO:0008284">
    <property type="term" value="P:positive regulation of cell population proliferation"/>
    <property type="evidence" value="ECO:0000318"/>
    <property type="project" value="GO_Central"/>
</dbReference>
<dbReference type="GO" id="GO:2000972">
    <property type="term" value="P:positive regulation of detection of glucose"/>
    <property type="evidence" value="ECO:0000250"/>
    <property type="project" value="UniProt"/>
</dbReference>
<dbReference type="GO" id="GO:0010838">
    <property type="term" value="P:positive regulation of keratinocyte proliferation"/>
    <property type="evidence" value="ECO:0000314"/>
    <property type="project" value="UniProt"/>
</dbReference>
<dbReference type="GO" id="GO:0090303">
    <property type="term" value="P:positive regulation of wound healing"/>
    <property type="evidence" value="ECO:0000250"/>
    <property type="project" value="UniProtKB"/>
</dbReference>
<dbReference type="GO" id="GO:0043434">
    <property type="term" value="P:response to peptide hormone"/>
    <property type="evidence" value="ECO:0000318"/>
    <property type="project" value="GO_Central"/>
</dbReference>
<dbReference type="GO" id="GO:0009609">
    <property type="term" value="P:response to symbiotic bacterium"/>
    <property type="evidence" value="ECO:0000250"/>
    <property type="project" value="UniProt"/>
</dbReference>
<dbReference type="GO" id="GO:0009611">
    <property type="term" value="P:response to wounding"/>
    <property type="evidence" value="ECO:0000314"/>
    <property type="project" value="UniProt"/>
</dbReference>
<dbReference type="CDD" id="cd03594">
    <property type="entry name" value="CLECT_REG-1_like"/>
    <property type="match status" value="1"/>
</dbReference>
<dbReference type="FunFam" id="3.10.100.10:FF:000015">
    <property type="entry name" value="C-type lectin Cal"/>
    <property type="match status" value="1"/>
</dbReference>
<dbReference type="Gene3D" id="3.10.100.10">
    <property type="entry name" value="Mannose-Binding Protein A, subunit A"/>
    <property type="match status" value="1"/>
</dbReference>
<dbReference type="InterPro" id="IPR001304">
    <property type="entry name" value="C-type_lectin-like"/>
</dbReference>
<dbReference type="InterPro" id="IPR016186">
    <property type="entry name" value="C-type_lectin-like/link_sf"/>
</dbReference>
<dbReference type="InterPro" id="IPR050111">
    <property type="entry name" value="C-type_lectin/snaclec_domain"/>
</dbReference>
<dbReference type="InterPro" id="IPR018378">
    <property type="entry name" value="C-type_lectin_CS"/>
</dbReference>
<dbReference type="InterPro" id="IPR016187">
    <property type="entry name" value="CTDL_fold"/>
</dbReference>
<dbReference type="PANTHER" id="PTHR22803">
    <property type="entry name" value="MANNOSE, PHOSPHOLIPASE, LECTIN RECEPTOR RELATED"/>
    <property type="match status" value="1"/>
</dbReference>
<dbReference type="Pfam" id="PF00059">
    <property type="entry name" value="Lectin_C"/>
    <property type="match status" value="1"/>
</dbReference>
<dbReference type="PRINTS" id="PR01504">
    <property type="entry name" value="PNCREATITSAP"/>
</dbReference>
<dbReference type="SMART" id="SM00034">
    <property type="entry name" value="CLECT"/>
    <property type="match status" value="1"/>
</dbReference>
<dbReference type="SUPFAM" id="SSF56436">
    <property type="entry name" value="C-type lectin-like"/>
    <property type="match status" value="1"/>
</dbReference>
<dbReference type="PROSITE" id="PS00615">
    <property type="entry name" value="C_TYPE_LECTIN_1"/>
    <property type="match status" value="1"/>
</dbReference>
<dbReference type="PROSITE" id="PS50041">
    <property type="entry name" value="C_TYPE_LECTIN_2"/>
    <property type="match status" value="1"/>
</dbReference>
<protein>
    <recommendedName>
        <fullName>Regenerating islet-derived protein 3-alpha</fullName>
        <shortName>REG-3-alpha</shortName>
    </recommendedName>
    <alternativeName>
        <fullName>Hepatointestinal pancreatic protein</fullName>
        <shortName>HIP/PAP</shortName>
    </alternativeName>
    <alternativeName>
        <fullName evidence="12">Human proislet peptide</fullName>
        <shortName evidence="12">HIP</shortName>
    </alternativeName>
    <alternativeName>
        <fullName>Pancreatitis-associated protein 1</fullName>
    </alternativeName>
    <alternativeName>
        <fullName>Regenerating islet-derived protein III-alpha</fullName>
        <shortName>Reg III-alpha</shortName>
    </alternativeName>
    <component>
        <recommendedName>
            <fullName>Regenerating islet-derived protein 3-alpha 16.5 kDa form</fullName>
        </recommendedName>
    </component>
    <component>
        <recommendedName>
            <fullName>Regenerating islet-derived protein 3-alpha 15 kDa form</fullName>
        </recommendedName>
    </component>
</protein>
<feature type="signal peptide" evidence="1">
    <location>
        <begin position="1"/>
        <end position="26"/>
    </location>
</feature>
<feature type="chain" id="PRO_0000017429" description="Regenerating islet-derived protein 3-alpha 16.5 kDa form">
    <location>
        <begin position="27"/>
        <end position="175"/>
    </location>
</feature>
<feature type="propeptide" id="PRO_0000422741" evidence="6">
    <location>
        <begin position="27"/>
        <end position="37"/>
    </location>
</feature>
<feature type="chain" id="PRO_0000422742" description="Regenerating islet-derived protein 3-alpha 15 kDa form">
    <location>
        <begin position="38"/>
        <end position="175"/>
    </location>
</feature>
<feature type="domain" description="C-type lectin" evidence="2">
    <location>
        <begin position="47"/>
        <end position="172"/>
    </location>
</feature>
<feature type="region of interest" description="Sufficient to activate EXTL3" evidence="5">
    <location>
        <begin position="103"/>
        <end position="118"/>
    </location>
</feature>
<feature type="short sequence motif" description="EPN" evidence="7 16">
    <location>
        <begin position="114"/>
        <end position="116"/>
    </location>
</feature>
<feature type="binding site" evidence="9 17">
    <location>
        <position position="50"/>
    </location>
    <ligand>
        <name>Zn(2+)</name>
        <dbReference type="ChEBI" id="CHEBI:29105"/>
    </ligand>
</feature>
<feature type="binding site" evidence="9 17">
    <location>
        <position position="107"/>
    </location>
    <ligand>
        <name>Zn(2+)</name>
        <dbReference type="ChEBI" id="CHEBI:29105"/>
    </ligand>
</feature>
<feature type="binding site" evidence="9 17">
    <location>
        <position position="121"/>
    </location>
    <ligand>
        <name>Zn(2+)</name>
        <dbReference type="ChEBI" id="CHEBI:29105"/>
    </ligand>
</feature>
<feature type="binding site" evidence="9 17">
    <location>
        <position position="145"/>
    </location>
    <ligand>
        <name>Zn(2+)</name>
        <dbReference type="ChEBI" id="CHEBI:29105"/>
    </ligand>
</feature>
<feature type="disulfide bond" evidence="2">
    <location>
        <begin position="40"/>
        <end position="51"/>
    </location>
</feature>
<feature type="disulfide bond" evidence="2">
    <location>
        <begin position="68"/>
        <end position="171"/>
    </location>
</feature>
<feature type="disulfide bond" evidence="2">
    <location>
        <begin position="146"/>
        <end position="163"/>
    </location>
</feature>
<feature type="mutagenesis site" description="Reduces binding to phospholipids and membrane toxicity. Loss of filament formation." evidence="9">
    <original>K</original>
    <variation>A</variation>
    <location>
        <position position="93"/>
    </location>
</feature>
<feature type="mutagenesis site" description="No effect on binding to phospholipids and membrane toxicity." evidence="9">
    <original>K</original>
    <variation>Q</variation>
    <variation>H</variation>
    <location>
        <position position="93"/>
    </location>
</feature>
<feature type="mutagenesis site" description="Reduces peptidoglycan binding and antibacterial activity. No effect on binding to phospholipids and membrane toxicity. No effect on filament formation." evidence="7 9">
    <original>E</original>
    <variation>Q</variation>
    <location>
        <position position="114"/>
    </location>
</feature>
<feature type="mutagenesis site" description="Reduces antibacterial activity but no effect on peptidoglycan binding." evidence="7">
    <original>E</original>
    <variation>Q</variation>
    <location>
        <position position="118"/>
    </location>
</feature>
<feature type="mutagenesis site" description="Reduces membrane toxicity." evidence="9">
    <original>R</original>
    <variation>A</variation>
    <location>
        <position position="166"/>
    </location>
</feature>
<feature type="sequence conflict" description="In Ref. 2; AAA36415." evidence="13" ref="2">
    <original>FTD</original>
    <variation>VH</variation>
    <location>
        <begin position="173"/>
        <end position="175"/>
    </location>
</feature>
<feature type="strand" evidence="19">
    <location>
        <begin position="44"/>
        <end position="47"/>
    </location>
</feature>
<feature type="strand" evidence="19">
    <location>
        <begin position="50"/>
        <end position="59"/>
    </location>
</feature>
<feature type="helix" evidence="19">
    <location>
        <begin position="61"/>
        <end position="68"/>
    </location>
</feature>
<feature type="helix" evidence="19">
    <location>
        <begin position="82"/>
        <end position="92"/>
    </location>
</feature>
<feature type="strand" evidence="19">
    <location>
        <begin position="100"/>
        <end position="107"/>
    </location>
</feature>
<feature type="turn" evidence="19">
    <location>
        <begin position="109"/>
        <end position="112"/>
    </location>
</feature>
<feature type="strand" evidence="18">
    <location>
        <begin position="114"/>
        <end position="116"/>
    </location>
</feature>
<feature type="turn" evidence="18">
    <location>
        <begin position="123"/>
        <end position="125"/>
    </location>
</feature>
<feature type="strand" evidence="19">
    <location>
        <begin position="133"/>
        <end position="135"/>
    </location>
</feature>
<feature type="helix" evidence="19">
    <location>
        <begin position="137"/>
        <end position="139"/>
    </location>
</feature>
<feature type="strand" evidence="19">
    <location>
        <begin position="140"/>
        <end position="142"/>
    </location>
</feature>
<feature type="strand" evidence="19">
    <location>
        <begin position="145"/>
        <end position="150"/>
    </location>
</feature>
<feature type="helix" evidence="19">
    <location>
        <begin position="151"/>
        <end position="153"/>
    </location>
</feature>
<feature type="strand" evidence="19">
    <location>
        <begin position="157"/>
        <end position="161"/>
    </location>
</feature>
<feature type="strand" evidence="19">
    <location>
        <begin position="167"/>
        <end position="173"/>
    </location>
</feature>
<gene>
    <name evidence="15" type="primary">REG3A</name>
    <name evidence="12" type="synonym">HIP</name>
    <name type="synonym">PAP</name>
    <name type="synonym">PAP1</name>
</gene>
<keyword id="KW-0002">3D-structure</keyword>
<keyword id="KW-0011">Acute phase</keyword>
<keyword id="KW-0929">Antimicrobial</keyword>
<keyword id="KW-0903">Direct protein sequencing</keyword>
<keyword id="KW-1015">Disulfide bond</keyword>
<keyword id="KW-0395">Inflammatory response</keyword>
<keyword id="KW-0430">Lectin</keyword>
<keyword id="KW-1267">Proteomics identification</keyword>
<keyword id="KW-1185">Reference proteome</keyword>
<keyword id="KW-0964">Secreted</keyword>
<keyword id="KW-0732">Signal</keyword>
<reference key="1">
    <citation type="journal article" date="1993" name="Biochim. Biophys. Acta">
        <title>Cloning and tissue-specific expression of cDNAs for the human and mouse homologues of rat pancreatitis-associated protein (PAP).</title>
        <authorList>
            <person name="Itoh T."/>
            <person name="Teraoka H."/>
        </authorList>
    </citation>
    <scope>NUCLEOTIDE SEQUENCE [MRNA]</scope>
    <source>
        <tissue>Pancreas</tissue>
        <tissue>Small intestine</tissue>
    </source>
</reference>
<reference key="2">
    <citation type="journal article" date="1992" name="J. Clin. Invest.">
        <title>Human pancreatitis-associated protein. Messenger RNA cloning and expression in pancreatic diseases.</title>
        <authorList>
            <person name="Orelle B."/>
            <person name="Keim V."/>
            <person name="Masciotra L."/>
            <person name="Dagorn J.-C."/>
            <person name="Iovanna J.-L."/>
        </authorList>
    </citation>
    <scope>NUCLEOTIDE SEQUENCE [MRNA]</scope>
    <scope>TISSUE SPECIFICITY</scope>
    <scope>SUBCELLULAR LOCATION</scope>
    <source>
        <tissue>Pancreas</tissue>
    </source>
</reference>
<reference key="3">
    <citation type="journal article" date="1992" name="Cancer Res.">
        <title>A novel gene (HIP) activated in human primary liver cancer.</title>
        <authorList>
            <person name="Lasserre C."/>
            <person name="Christa L."/>
            <person name="Simon M.T."/>
            <person name="Vernier P."/>
            <person name="Brechot C."/>
        </authorList>
    </citation>
    <scope>NUCLEOTIDE SEQUENCE [MRNA]</scope>
    <source>
        <tissue>Liver</tissue>
    </source>
</reference>
<reference key="4">
    <citation type="journal article" date="1994" name="Genomics">
        <title>Molecular cloning, genomic organization, and chromosomal localization of the human pancreatitis-associated protein (PAP) gene.</title>
        <authorList>
            <person name="Dusetti N.J."/>
            <person name="Frigerio J.-M."/>
            <person name="Fox M.F."/>
            <person name="Swallow D.M."/>
            <person name="Dagorn J.-C."/>
            <person name="Iovanna J.L."/>
        </authorList>
    </citation>
    <scope>NUCLEOTIDE SEQUENCE [MRNA]</scope>
    <source>
        <tissue>Blood</tissue>
    </source>
</reference>
<reference key="5">
    <citation type="journal article" date="1994" name="Eur. J. Biochem.">
        <title>Structural organization and chromosomal localization of a human gene (HIP/PAP) encoding a C-type lectin overexpressed in primary liver cancer.</title>
        <authorList>
            <person name="Lasserre C."/>
            <person name="Simon M.T."/>
            <person name="Ishikawa H."/>
            <person name="Diriong S."/>
            <person name="Nguyen V.C."/>
            <person name="Christa L."/>
            <person name="Vernier P."/>
            <person name="Brechot C."/>
        </authorList>
    </citation>
    <scope>NUCLEOTIDE SEQUENCE [GENOMIC DNA]</scope>
</reference>
<reference key="6">
    <citation type="journal article" date="2004" name="Genome Res.">
        <title>The status, quality, and expansion of the NIH full-length cDNA project: the Mammalian Gene Collection (MGC).</title>
        <authorList>
            <consortium name="The MGC Project Team"/>
        </authorList>
    </citation>
    <scope>NUCLEOTIDE SEQUENCE [LARGE SCALE MRNA]</scope>
    <source>
        <tissue>Pancreas</tissue>
    </source>
</reference>
<reference key="7">
    <citation type="journal article" date="2009" name="Biochem. J.">
        <title>Proteolytic activation of human pancreatitis-associated protein is required for peptidoglycan binding and bacterial aggregation.</title>
        <authorList>
            <person name="Medveczky P."/>
            <person name="Szmola R."/>
            <person name="Sahin-Toth M."/>
        </authorList>
    </citation>
    <scope>PROTEIN SEQUENCE OF N-TERMINUS</scope>
    <scope>PROTEOLYTIC PROCESSING</scope>
    <scope>INDUCTION DURING PANCREATITIS</scope>
</reference>
<reference key="8">
    <citation type="journal article" date="2006" name="Science">
        <title>Symbiotic bacteria direct expression of an intestinal bactericidal lectin.</title>
        <authorList>
            <person name="Cash H.L."/>
            <person name="Whitham C.V."/>
            <person name="Behrendt C.L."/>
            <person name="Hooper L.V."/>
        </authorList>
    </citation>
    <scope>FUNCTION</scope>
    <scope>MANNAN- AND PEPTIDOGLYCAN-BINDING</scope>
</reference>
<reference key="9">
    <citation type="journal article" date="2008" name="Endocr. Pract.">
        <title>Discovery of a human peptide sequence signaling islet neogenesis.</title>
        <authorList>
            <person name="Levetan C.S."/>
            <person name="Upham L.V."/>
            <person name="Deng S."/>
            <person name="Laury-Kleintop L."/>
            <person name="Kery V."/>
            <person name="Nolan R."/>
            <person name="Quinlan J."/>
            <person name="Torres C."/>
            <person name="El-Hajj R.J."/>
        </authorList>
    </citation>
    <scope>FUNCTION</scope>
    <scope>REGION</scope>
</reference>
<reference key="10">
    <citation type="journal article" date="2012" name="Immunity">
        <title>The antimicrobial protein REG3A regulates keratinocyte proliferation and differentiation after skin injury.</title>
        <authorList>
            <person name="Lai Y."/>
            <person name="Li D."/>
            <person name="Li C."/>
            <person name="Muehleisen B."/>
            <person name="Radek K.A."/>
            <person name="Park H.J."/>
            <person name="Jiang Z."/>
            <person name="Li Z."/>
            <person name="Lei H."/>
            <person name="Quan Y."/>
            <person name="Zhang T."/>
            <person name="Wu Y."/>
            <person name="Kotol P."/>
            <person name="Morizane S."/>
            <person name="Hata T.R."/>
            <person name="Iwatsuki K."/>
            <person name="Tang C."/>
            <person name="Gallo R.L."/>
        </authorList>
    </citation>
    <scope>TISSUE SPECIFICITY</scope>
    <scope>INTERACTION WITH EXTL3</scope>
</reference>
<reference key="11">
    <citation type="journal article" date="2016" name="Nat. Commun.">
        <title>Hyperglycaemia inhibits REG3A expression to exacerbate TLR3-mediated skin inflammation in diabetes.</title>
        <authorList>
            <person name="Wu Y."/>
            <person name="Quan Y."/>
            <person name="Liu Y."/>
            <person name="Liu K."/>
            <person name="Li H."/>
            <person name="Jiang Z."/>
            <person name="Zhang T."/>
            <person name="Lei H."/>
            <person name="Radek K.A."/>
            <person name="Li D."/>
            <person name="Wang Z."/>
            <person name="Lu J."/>
            <person name="Wang W."/>
            <person name="Ji S."/>
            <person name="Xia Z."/>
            <person name="Lai Y."/>
        </authorList>
    </citation>
    <scope>FUNCTION</scope>
    <scope>TISSUE SPECIFICITY</scope>
    <scope>INDUCTION BY IL17A AND IL33</scope>
</reference>
<reference key="12">
    <citation type="journal article" date="2021" name="Commun. Biol.">
        <title>REG3A/REG3B promotes acinar to ductal metaplasia through binding to EXTL3 and activating the RAS-RAF-MEK-ERK signaling pathway.</title>
        <authorList>
            <person name="Zhang H."/>
            <person name="Corredor A.L.G."/>
            <person name="Messina-Pacheco J."/>
            <person name="Li Q."/>
            <person name="Zogopoulos G."/>
            <person name="Kaddour N."/>
            <person name="Wang Y."/>
            <person name="Shi B.Y."/>
            <person name="Gregorieff A."/>
            <person name="Liu J.L."/>
            <person name="Gao Z.H."/>
        </authorList>
    </citation>
    <scope>FUNCTION</scope>
    <scope>TISSUE SPECIFICITY</scope>
</reference>
<reference evidence="16" key="13">
    <citation type="journal article" date="2010" name="Proc. Natl. Acad. Sci. U.S.A.">
        <title>Molecular basis for peptidoglycan recognition by a bactericidal lectin.</title>
        <authorList>
            <person name="Lehotzky R.E."/>
            <person name="Partch C.L."/>
            <person name="Mukherjee S."/>
            <person name="Cash H.L."/>
            <person name="Goldman W.E."/>
            <person name="Gardner K.H."/>
            <person name="Hooper L.V."/>
        </authorList>
    </citation>
    <scope>STRUCTURE BY NMR</scope>
    <scope>MOTIF EPN</scope>
    <scope>MUTAGENESIS OF GLU-114 AND GLU-118</scope>
</reference>
<reference evidence="17" key="14">
    <citation type="journal article" date="2014" name="Nature">
        <title>Antibacterial membrane attack by a pore-forming intestinal C-type lectin.</title>
        <authorList>
            <person name="Mukherjee S."/>
            <person name="Zheng H."/>
            <person name="Derebe M.G."/>
            <person name="Callenberg K.M."/>
            <person name="Partch C.L."/>
            <person name="Rollins D."/>
            <person name="Propheter D.C."/>
            <person name="Rizo J."/>
            <person name="Grabe M."/>
            <person name="Jiang Q.X."/>
            <person name="Hooper L.V."/>
        </authorList>
    </citation>
    <scope>X-RAY CRYSTALLOGRAPHY (1.47 ANGSTROMS) OF 38-175 IN COMPLEX WITH ZN(2+)</scope>
    <scope>FUNCTION</scope>
    <scope>ACTIVITY REGULATION</scope>
    <scope>SUBUNIT</scope>
    <scope>MUTAGENESIS OF LYS-93; GLU-114 AND ARG-166</scope>
</reference>
<comment type="function">
    <molecule>Regenerating islet-derived protein 3-alpha 15 kDa form</molecule>
    <text evidence="4 9">Bactericidal C-type lectin which acts exclusively against Gram-positive bacteria and mediates bacterial killing by binding to surface-exposed carbohydrate moieties of peptidoglycan (PubMed:16931762). Binds membrane phospholipids and kills bacteria by forming a hexameric membrane-permeabilizing oligomeric pore (PubMed:24256734).</text>
</comment>
<comment type="function">
    <text evidence="5 8 10 11">Acts as a hormone in response to different stimuli like anti-inflammatory signals, such as IL17A, or gut microbiome. Secreted by different cell types to activate its receptor EXTL3 and induce cell specific signaling pathways (PubMed:19158046, PubMed:22727489, PubMed:27830702, PubMed:34099862). Induced by IL17A in keratinocytes, regulates keratinocyte proliferation and differentiation after skin injury via activation of EXTL3-PI3K-AKT signaling pathway (PubMed:22727489). In parallel, inhibits skin inflammation through the inhibition of inflammatory cytokines such as IL6 and TNF (PubMed:27830702). In pancreas, is able to permealize beta-cells membrane and stimulate their proliferation (PubMed:19158046).</text>
</comment>
<comment type="function">
    <molecule>Regenerating islet-derived protein 3-alpha 16.5 kDa form</molecule>
    <text evidence="14">Has bacteriostatic activity.</text>
</comment>
<comment type="activity regulation">
    <molecule>Regenerating islet-derived protein 3-alpha 15 kDa form</molecule>
    <text evidence="9">Lipopolysaccharide inhibits pore-forming activity, explaining why is bactericidal for Gram-positive but not Gram-negative bacteria.</text>
</comment>
<comment type="subunit">
    <molecule>Regenerating islet-derived protein 3-alpha 15 kDa form</molecule>
    <text evidence="8 9">Forms a hexameric membrane-permeabilizing oligomeric pore on membrane phospholipids. The hexamer is formed by three dimers related by helical symmetry (PubMed:24256734). Forms filaments, filamentation traps pore complexes and limits damage to host cells (PubMed:24256734). Interacts with EXTL3.</text>
</comment>
<comment type="interaction">
    <interactant intactId="EBI-10223932">
        <id>Q06141</id>
    </interactant>
    <interactant intactId="EBI-724076">
        <id>Q99750</id>
        <label>MDFI</label>
    </interactant>
    <organismsDiffer>false</organismsDiffer>
    <experiments>3</experiments>
</comment>
<comment type="interaction">
    <interactant intactId="EBI-10223932">
        <id>Q06141</id>
    </interactant>
    <interactant intactId="EBI-10223932">
        <id>Q06141</id>
        <label>REG3A</label>
    </interactant>
    <organismsDiffer>false</organismsDiffer>
    <experiments>2</experiments>
</comment>
<comment type="subcellular location">
    <subcellularLocation>
        <location evidence="3">Secreted</location>
    </subcellularLocation>
    <text evidence="3">Found in the apical region of pancreatic acinar cells.</text>
</comment>
<comment type="tissue specificity">
    <text evidence="3 8 10">Expressed by keratinocytes (PubMed:27830702). Highly expressed in epidermal keratinocytes of psoriasis patients (at protein level) (PubMed:22727489). Constitutively expressed in intestine. Low expression is found in healthy pancreas. Overexpressed during the acute phase of pancreatitis and in some patients with chronic pancreatitis (PubMed:1469087).</text>
</comment>
<comment type="induction">
    <text evidence="6 10">Appears in pancreatic juice after induction of pancreatic inflammation (PubMed:19254208). Induced by IL17A and IL33 during skin inflammation (PubMed:27830702).</text>
</comment>
<comment type="domain">
    <text evidence="7">The EPN motif is essential for recognition of the peptidoglycan carbohydrate backbone and for efficient bacterial killing with Glu-114 playing a key role in peptidoglycan binding and bactericidal activity.</text>
</comment>
<comment type="PTM">
    <text evidence="6">Proteolytic processing by trypsin removes an inhibitory N-terminal propeptide and is essential for peptidoglycan binding and antibacterial activity.</text>
</comment>
<comment type="online information" name="Functional Glycomics Gateway - Glycan Binding">
    <link uri="http://www.functionalglycomics.org/glycomics/GBPServlet?&amp;operationType=view&amp;cbpId=cbp_hum_Ctlect_256"/>
    <text>Pancreatitis-associated protein 1</text>
</comment>